<organism evidence="3">
    <name type="scientific">Pseudomonas sp. (strain CF600)</name>
    <dbReference type="NCBI Taxonomy" id="79676"/>
    <lineage>
        <taxon>Bacteria</taxon>
        <taxon>Pseudomonadati</taxon>
        <taxon>Pseudomonadota</taxon>
    </lineage>
</organism>
<proteinExistence type="evidence at protein level"/>
<reference evidence="3" key="1">
    <citation type="journal article" date="2002" name="Res. Microbiol.">
        <title>Occurrence and properties of glutathione S-transferases in phenol-degrading Pseudomonas strains.</title>
        <authorList>
            <person name="Santos P.M."/>
            <person name="Mignogna G."/>
            <person name="Heipieper H.J."/>
            <person name="Zennaro E."/>
        </authorList>
    </citation>
    <scope>PROTEIN SEQUENCE</scope>
    <scope>FUNCTION</scope>
    <scope>CATALYTIC ACTIVITY</scope>
    <scope>SUBUNIT</scope>
    <scope>SUBCELLULAR LOCATION</scope>
</reference>
<accession>P82997</accession>
<sequence>MLKLHGFSVSNYYNMVKLALLEKG</sequence>
<evidence type="ECO:0000269" key="1">
    <source>
    </source>
</evidence>
<evidence type="ECO:0000303" key="2">
    <source>
    </source>
</evidence>
<evidence type="ECO:0000305" key="3"/>
<protein>
    <recommendedName>
        <fullName>Glutathione S-transferase</fullName>
        <ecNumber>2.5.1.18</ecNumber>
    </recommendedName>
</protein>
<dbReference type="EC" id="2.5.1.18"/>
<dbReference type="GO" id="GO:0005737">
    <property type="term" value="C:cytoplasm"/>
    <property type="evidence" value="ECO:0000303"/>
    <property type="project" value="UniProtKB"/>
</dbReference>
<dbReference type="GO" id="GO:0004364">
    <property type="term" value="F:glutathione transferase activity"/>
    <property type="evidence" value="ECO:0000303"/>
    <property type="project" value="UniProtKB"/>
</dbReference>
<keyword id="KW-0963">Cytoplasm</keyword>
<keyword id="KW-0903">Direct protein sequencing</keyword>
<keyword id="KW-0808">Transferase</keyword>
<comment type="function">
    <text evidence="1">Conjugation of reduced glutathione to a wide number of exogenous and endogenous hydrophobic electrophiles.</text>
</comment>
<comment type="catalytic activity">
    <reaction evidence="1">
        <text>RX + glutathione = an S-substituted glutathione + a halide anion + H(+)</text>
        <dbReference type="Rhea" id="RHEA:16437"/>
        <dbReference type="ChEBI" id="CHEBI:15378"/>
        <dbReference type="ChEBI" id="CHEBI:16042"/>
        <dbReference type="ChEBI" id="CHEBI:17792"/>
        <dbReference type="ChEBI" id="CHEBI:57925"/>
        <dbReference type="ChEBI" id="CHEBI:90779"/>
        <dbReference type="EC" id="2.5.1.18"/>
    </reaction>
</comment>
<comment type="subunit">
    <text evidence="1">Monomer and homodimer.</text>
</comment>
<comment type="subcellular location">
    <subcellularLocation>
        <location evidence="1">Cytoplasm</location>
    </subcellularLocation>
</comment>
<comment type="similarity">
    <text evidence="3">Belongs to the GST superfamily.</text>
</comment>
<feature type="chain" id="PRO_0000185978" description="Glutathione S-transferase">
    <location>
        <begin position="1"/>
        <end position="24" status="greater than"/>
    </location>
</feature>
<feature type="non-terminal residue" evidence="2">
    <location>
        <position position="24"/>
    </location>
</feature>
<name>GSTE_PSEUF</name>